<dbReference type="EC" id="2.1.3.15" evidence="1"/>
<dbReference type="EMBL" id="CU468135">
    <property type="protein sequence ID" value="CAO95952.1"/>
    <property type="molecule type" value="Genomic_DNA"/>
</dbReference>
<dbReference type="RefSeq" id="WP_012440654.1">
    <property type="nucleotide sequence ID" value="NC_010694.1"/>
</dbReference>
<dbReference type="SMR" id="B2VHY2"/>
<dbReference type="STRING" id="465817.ETA_09060"/>
<dbReference type="KEGG" id="eta:ETA_09060"/>
<dbReference type="eggNOG" id="COG0825">
    <property type="taxonomic scope" value="Bacteria"/>
</dbReference>
<dbReference type="HOGENOM" id="CLU_015486_0_2_6"/>
<dbReference type="OrthoDB" id="9808023at2"/>
<dbReference type="UniPathway" id="UPA00655">
    <property type="reaction ID" value="UER00711"/>
</dbReference>
<dbReference type="Proteomes" id="UP000001726">
    <property type="component" value="Chromosome"/>
</dbReference>
<dbReference type="GO" id="GO:0009317">
    <property type="term" value="C:acetyl-CoA carboxylase complex"/>
    <property type="evidence" value="ECO:0007669"/>
    <property type="project" value="InterPro"/>
</dbReference>
<dbReference type="GO" id="GO:0003989">
    <property type="term" value="F:acetyl-CoA carboxylase activity"/>
    <property type="evidence" value="ECO:0007669"/>
    <property type="project" value="InterPro"/>
</dbReference>
<dbReference type="GO" id="GO:0005524">
    <property type="term" value="F:ATP binding"/>
    <property type="evidence" value="ECO:0007669"/>
    <property type="project" value="UniProtKB-KW"/>
</dbReference>
<dbReference type="GO" id="GO:0016743">
    <property type="term" value="F:carboxyl- or carbamoyltransferase activity"/>
    <property type="evidence" value="ECO:0007669"/>
    <property type="project" value="UniProtKB-UniRule"/>
</dbReference>
<dbReference type="GO" id="GO:0006633">
    <property type="term" value="P:fatty acid biosynthetic process"/>
    <property type="evidence" value="ECO:0007669"/>
    <property type="project" value="UniProtKB-KW"/>
</dbReference>
<dbReference type="GO" id="GO:2001295">
    <property type="term" value="P:malonyl-CoA biosynthetic process"/>
    <property type="evidence" value="ECO:0007669"/>
    <property type="project" value="UniProtKB-UniRule"/>
</dbReference>
<dbReference type="FunFam" id="3.90.226.10:FF:000008">
    <property type="entry name" value="Acetyl-coenzyme A carboxylase carboxyl transferase subunit alpha"/>
    <property type="match status" value="1"/>
</dbReference>
<dbReference type="Gene3D" id="3.90.226.10">
    <property type="entry name" value="2-enoyl-CoA Hydratase, Chain A, domain 1"/>
    <property type="match status" value="1"/>
</dbReference>
<dbReference type="HAMAP" id="MF_00823">
    <property type="entry name" value="AcetylCoA_CT_alpha"/>
    <property type="match status" value="1"/>
</dbReference>
<dbReference type="InterPro" id="IPR001095">
    <property type="entry name" value="Acetyl_CoA_COase_a_su"/>
</dbReference>
<dbReference type="InterPro" id="IPR029045">
    <property type="entry name" value="ClpP/crotonase-like_dom_sf"/>
</dbReference>
<dbReference type="InterPro" id="IPR011763">
    <property type="entry name" value="COA_CT_C"/>
</dbReference>
<dbReference type="NCBIfam" id="TIGR00513">
    <property type="entry name" value="accA"/>
    <property type="match status" value="1"/>
</dbReference>
<dbReference type="NCBIfam" id="NF041504">
    <property type="entry name" value="AccA_sub"/>
    <property type="match status" value="1"/>
</dbReference>
<dbReference type="NCBIfam" id="NF004344">
    <property type="entry name" value="PRK05724.1"/>
    <property type="match status" value="1"/>
</dbReference>
<dbReference type="PANTHER" id="PTHR42853">
    <property type="entry name" value="ACETYL-COENZYME A CARBOXYLASE CARBOXYL TRANSFERASE SUBUNIT ALPHA"/>
    <property type="match status" value="1"/>
</dbReference>
<dbReference type="PANTHER" id="PTHR42853:SF3">
    <property type="entry name" value="ACETYL-COENZYME A CARBOXYLASE CARBOXYL TRANSFERASE SUBUNIT ALPHA, CHLOROPLASTIC"/>
    <property type="match status" value="1"/>
</dbReference>
<dbReference type="Pfam" id="PF03255">
    <property type="entry name" value="ACCA"/>
    <property type="match status" value="1"/>
</dbReference>
<dbReference type="PRINTS" id="PR01069">
    <property type="entry name" value="ACCCTRFRASEA"/>
</dbReference>
<dbReference type="SUPFAM" id="SSF52096">
    <property type="entry name" value="ClpP/crotonase"/>
    <property type="match status" value="1"/>
</dbReference>
<dbReference type="PROSITE" id="PS50989">
    <property type="entry name" value="COA_CT_CTER"/>
    <property type="match status" value="1"/>
</dbReference>
<organism>
    <name type="scientific">Erwinia tasmaniensis (strain DSM 17950 / CFBP 7177 / CIP 109463 / NCPPB 4357 / Et1/99)</name>
    <dbReference type="NCBI Taxonomy" id="465817"/>
    <lineage>
        <taxon>Bacteria</taxon>
        <taxon>Pseudomonadati</taxon>
        <taxon>Pseudomonadota</taxon>
        <taxon>Gammaproteobacteria</taxon>
        <taxon>Enterobacterales</taxon>
        <taxon>Erwiniaceae</taxon>
        <taxon>Erwinia</taxon>
    </lineage>
</organism>
<name>ACCA_ERWT9</name>
<accession>B2VHY2</accession>
<evidence type="ECO:0000255" key="1">
    <source>
        <dbReference type="HAMAP-Rule" id="MF_00823"/>
    </source>
</evidence>
<evidence type="ECO:0000255" key="2">
    <source>
        <dbReference type="PROSITE-ProRule" id="PRU01137"/>
    </source>
</evidence>
<reference key="1">
    <citation type="journal article" date="2008" name="Environ. Microbiol.">
        <title>The genome of Erwinia tasmaniensis strain Et1/99, a non-pathogenic bacterium in the genus Erwinia.</title>
        <authorList>
            <person name="Kube M."/>
            <person name="Migdoll A.M."/>
            <person name="Mueller I."/>
            <person name="Kuhl H."/>
            <person name="Beck A."/>
            <person name="Reinhardt R."/>
            <person name="Geider K."/>
        </authorList>
    </citation>
    <scope>NUCLEOTIDE SEQUENCE [LARGE SCALE GENOMIC DNA]</scope>
    <source>
        <strain>DSM 17950 / CFBP 7177 / CIP 109463 / NCPPB 4357 / Et1/99</strain>
    </source>
</reference>
<feature type="chain" id="PRO_1000134490" description="Acetyl-coenzyme A carboxylase carboxyl transferase subunit alpha">
    <location>
        <begin position="1"/>
        <end position="319"/>
    </location>
</feature>
<feature type="domain" description="CoA carboxyltransferase C-terminal" evidence="2">
    <location>
        <begin position="35"/>
        <end position="296"/>
    </location>
</feature>
<sequence length="319" mass="35219">MSLNYLDFEQPIAELEAKIDSLKSVGRQDEKLDINLDEEVQRLRDKSVELTRKIFSDLGAWQIAQLARHPLRPYTLDYVRNVFTDFDELAGDRAYADDKAIVGGIARLEDRPVMIIGHQKGRETKEKIRRNFGMPAPEGYRKALRLMEMAERFNMPIITFIDTPGAYPGVGAEERGQSEAIARNLREMSGLKVPVICTVIGEGGSGGALAIGVGDKVNMLQYSTYSVISPEGCASILWKSADKAPLAAEAMGIIAPRLKELKLIDSVIPEPLGGAHRDPLAIGASLKAQLLADLADLDTLTKAELLDRRYQRLMSYGYA</sequence>
<gene>
    <name evidence="1" type="primary">accA</name>
    <name type="ordered locus">ETA_09060</name>
</gene>
<proteinExistence type="inferred from homology"/>
<protein>
    <recommendedName>
        <fullName evidence="1">Acetyl-coenzyme A carboxylase carboxyl transferase subunit alpha</fullName>
        <shortName evidence="1">ACCase subunit alpha</shortName>
        <shortName evidence="1">Acetyl-CoA carboxylase carboxyltransferase subunit alpha</shortName>
        <ecNumber evidence="1">2.1.3.15</ecNumber>
    </recommendedName>
</protein>
<comment type="function">
    <text evidence="1">Component of the acetyl coenzyme A carboxylase (ACC) complex. First, biotin carboxylase catalyzes the carboxylation of biotin on its carrier protein (BCCP) and then the CO(2) group is transferred by the carboxyltransferase to acetyl-CoA to form malonyl-CoA.</text>
</comment>
<comment type="catalytic activity">
    <reaction evidence="1">
        <text>N(6)-carboxybiotinyl-L-lysyl-[protein] + acetyl-CoA = N(6)-biotinyl-L-lysyl-[protein] + malonyl-CoA</text>
        <dbReference type="Rhea" id="RHEA:54728"/>
        <dbReference type="Rhea" id="RHEA-COMP:10505"/>
        <dbReference type="Rhea" id="RHEA-COMP:10506"/>
        <dbReference type="ChEBI" id="CHEBI:57288"/>
        <dbReference type="ChEBI" id="CHEBI:57384"/>
        <dbReference type="ChEBI" id="CHEBI:83144"/>
        <dbReference type="ChEBI" id="CHEBI:83145"/>
        <dbReference type="EC" id="2.1.3.15"/>
    </reaction>
</comment>
<comment type="pathway">
    <text evidence="1">Lipid metabolism; malonyl-CoA biosynthesis; malonyl-CoA from acetyl-CoA: step 1/1.</text>
</comment>
<comment type="subunit">
    <text evidence="1">Acetyl-CoA carboxylase is a heterohexamer composed of biotin carboxyl carrier protein (AccB), biotin carboxylase (AccC) and two subunits each of ACCase subunit alpha (AccA) and ACCase subunit beta (AccD).</text>
</comment>
<comment type="subcellular location">
    <subcellularLocation>
        <location evidence="1">Cytoplasm</location>
    </subcellularLocation>
</comment>
<comment type="similarity">
    <text evidence="1">Belongs to the AccA family.</text>
</comment>
<keyword id="KW-0067">ATP-binding</keyword>
<keyword id="KW-0963">Cytoplasm</keyword>
<keyword id="KW-0275">Fatty acid biosynthesis</keyword>
<keyword id="KW-0276">Fatty acid metabolism</keyword>
<keyword id="KW-0444">Lipid biosynthesis</keyword>
<keyword id="KW-0443">Lipid metabolism</keyword>
<keyword id="KW-0547">Nucleotide-binding</keyword>
<keyword id="KW-1185">Reference proteome</keyword>
<keyword id="KW-0808">Transferase</keyword>